<accession>A6WKQ5</accession>
<evidence type="ECO:0000255" key="1">
    <source>
        <dbReference type="HAMAP-Rule" id="MF_00071"/>
    </source>
</evidence>
<protein>
    <recommendedName>
        <fullName evidence="1">Elongation factor 4</fullName>
        <shortName evidence="1">EF-4</shortName>
        <ecNumber evidence="1">3.6.5.n1</ecNumber>
    </recommendedName>
    <alternativeName>
        <fullName evidence="1">Ribosomal back-translocase LepA</fullName>
    </alternativeName>
</protein>
<proteinExistence type="inferred from homology"/>
<keyword id="KW-0997">Cell inner membrane</keyword>
<keyword id="KW-1003">Cell membrane</keyword>
<keyword id="KW-0342">GTP-binding</keyword>
<keyword id="KW-0378">Hydrolase</keyword>
<keyword id="KW-0472">Membrane</keyword>
<keyword id="KW-0547">Nucleotide-binding</keyword>
<keyword id="KW-0648">Protein biosynthesis</keyword>
<dbReference type="EC" id="3.6.5.n1" evidence="1"/>
<dbReference type="EMBL" id="CP000753">
    <property type="protein sequence ID" value="ABS07394.1"/>
    <property type="molecule type" value="Genomic_DNA"/>
</dbReference>
<dbReference type="RefSeq" id="WP_006080777.1">
    <property type="nucleotide sequence ID" value="NC_009665.1"/>
</dbReference>
<dbReference type="SMR" id="A6WKQ5"/>
<dbReference type="KEGG" id="sbm:Shew185_1243"/>
<dbReference type="HOGENOM" id="CLU_009995_3_3_6"/>
<dbReference type="GO" id="GO:0005886">
    <property type="term" value="C:plasma membrane"/>
    <property type="evidence" value="ECO:0007669"/>
    <property type="project" value="UniProtKB-SubCell"/>
</dbReference>
<dbReference type="GO" id="GO:0005525">
    <property type="term" value="F:GTP binding"/>
    <property type="evidence" value="ECO:0007669"/>
    <property type="project" value="UniProtKB-UniRule"/>
</dbReference>
<dbReference type="GO" id="GO:0003924">
    <property type="term" value="F:GTPase activity"/>
    <property type="evidence" value="ECO:0007669"/>
    <property type="project" value="UniProtKB-UniRule"/>
</dbReference>
<dbReference type="GO" id="GO:0097216">
    <property type="term" value="F:guanosine tetraphosphate binding"/>
    <property type="evidence" value="ECO:0007669"/>
    <property type="project" value="UniProtKB-ARBA"/>
</dbReference>
<dbReference type="GO" id="GO:0043022">
    <property type="term" value="F:ribosome binding"/>
    <property type="evidence" value="ECO:0007669"/>
    <property type="project" value="UniProtKB-UniRule"/>
</dbReference>
<dbReference type="GO" id="GO:0003746">
    <property type="term" value="F:translation elongation factor activity"/>
    <property type="evidence" value="ECO:0007669"/>
    <property type="project" value="UniProtKB-UniRule"/>
</dbReference>
<dbReference type="GO" id="GO:0045727">
    <property type="term" value="P:positive regulation of translation"/>
    <property type="evidence" value="ECO:0007669"/>
    <property type="project" value="UniProtKB-UniRule"/>
</dbReference>
<dbReference type="CDD" id="cd03699">
    <property type="entry name" value="EF4_II"/>
    <property type="match status" value="1"/>
</dbReference>
<dbReference type="CDD" id="cd16260">
    <property type="entry name" value="EF4_III"/>
    <property type="match status" value="1"/>
</dbReference>
<dbReference type="CDD" id="cd01890">
    <property type="entry name" value="LepA"/>
    <property type="match status" value="1"/>
</dbReference>
<dbReference type="CDD" id="cd03709">
    <property type="entry name" value="lepA_C"/>
    <property type="match status" value="1"/>
</dbReference>
<dbReference type="FunFam" id="3.40.50.300:FF:000078">
    <property type="entry name" value="Elongation factor 4"/>
    <property type="match status" value="1"/>
</dbReference>
<dbReference type="FunFam" id="2.40.30.10:FF:000015">
    <property type="entry name" value="Translation factor GUF1, mitochondrial"/>
    <property type="match status" value="1"/>
</dbReference>
<dbReference type="FunFam" id="3.30.70.240:FF:000007">
    <property type="entry name" value="Translation factor GUF1, mitochondrial"/>
    <property type="match status" value="1"/>
</dbReference>
<dbReference type="FunFam" id="3.30.70.2570:FF:000001">
    <property type="entry name" value="Translation factor GUF1, mitochondrial"/>
    <property type="match status" value="1"/>
</dbReference>
<dbReference type="FunFam" id="3.30.70.870:FF:000004">
    <property type="entry name" value="Translation factor GUF1, mitochondrial"/>
    <property type="match status" value="1"/>
</dbReference>
<dbReference type="Gene3D" id="3.30.70.240">
    <property type="match status" value="1"/>
</dbReference>
<dbReference type="Gene3D" id="3.30.70.2570">
    <property type="entry name" value="Elongation factor 4, C-terminal domain"/>
    <property type="match status" value="1"/>
</dbReference>
<dbReference type="Gene3D" id="3.30.70.870">
    <property type="entry name" value="Elongation Factor G (Translational Gtpase), domain 3"/>
    <property type="match status" value="1"/>
</dbReference>
<dbReference type="Gene3D" id="3.40.50.300">
    <property type="entry name" value="P-loop containing nucleotide triphosphate hydrolases"/>
    <property type="match status" value="1"/>
</dbReference>
<dbReference type="Gene3D" id="2.40.30.10">
    <property type="entry name" value="Translation factors"/>
    <property type="match status" value="1"/>
</dbReference>
<dbReference type="HAMAP" id="MF_00071">
    <property type="entry name" value="LepA"/>
    <property type="match status" value="1"/>
</dbReference>
<dbReference type="InterPro" id="IPR006297">
    <property type="entry name" value="EF-4"/>
</dbReference>
<dbReference type="InterPro" id="IPR035647">
    <property type="entry name" value="EFG_III/V"/>
</dbReference>
<dbReference type="InterPro" id="IPR000640">
    <property type="entry name" value="EFG_V-like"/>
</dbReference>
<dbReference type="InterPro" id="IPR004161">
    <property type="entry name" value="EFTu-like_2"/>
</dbReference>
<dbReference type="InterPro" id="IPR031157">
    <property type="entry name" value="G_TR_CS"/>
</dbReference>
<dbReference type="InterPro" id="IPR038363">
    <property type="entry name" value="LepA_C_sf"/>
</dbReference>
<dbReference type="InterPro" id="IPR013842">
    <property type="entry name" value="LepA_CTD"/>
</dbReference>
<dbReference type="InterPro" id="IPR035654">
    <property type="entry name" value="LepA_IV"/>
</dbReference>
<dbReference type="InterPro" id="IPR027417">
    <property type="entry name" value="P-loop_NTPase"/>
</dbReference>
<dbReference type="InterPro" id="IPR005225">
    <property type="entry name" value="Small_GTP-bd"/>
</dbReference>
<dbReference type="InterPro" id="IPR000795">
    <property type="entry name" value="T_Tr_GTP-bd_dom"/>
</dbReference>
<dbReference type="InterPro" id="IPR009000">
    <property type="entry name" value="Transl_B-barrel_sf"/>
</dbReference>
<dbReference type="NCBIfam" id="TIGR01393">
    <property type="entry name" value="lepA"/>
    <property type="match status" value="1"/>
</dbReference>
<dbReference type="NCBIfam" id="TIGR00231">
    <property type="entry name" value="small_GTP"/>
    <property type="match status" value="1"/>
</dbReference>
<dbReference type="PANTHER" id="PTHR43512:SF4">
    <property type="entry name" value="TRANSLATION FACTOR GUF1 HOMOLOG, CHLOROPLASTIC"/>
    <property type="match status" value="1"/>
</dbReference>
<dbReference type="PANTHER" id="PTHR43512">
    <property type="entry name" value="TRANSLATION FACTOR GUF1-RELATED"/>
    <property type="match status" value="1"/>
</dbReference>
<dbReference type="Pfam" id="PF00679">
    <property type="entry name" value="EFG_C"/>
    <property type="match status" value="1"/>
</dbReference>
<dbReference type="Pfam" id="PF00009">
    <property type="entry name" value="GTP_EFTU"/>
    <property type="match status" value="1"/>
</dbReference>
<dbReference type="Pfam" id="PF03144">
    <property type="entry name" value="GTP_EFTU_D2"/>
    <property type="match status" value="1"/>
</dbReference>
<dbReference type="Pfam" id="PF06421">
    <property type="entry name" value="LepA_C"/>
    <property type="match status" value="1"/>
</dbReference>
<dbReference type="PRINTS" id="PR00315">
    <property type="entry name" value="ELONGATNFCT"/>
</dbReference>
<dbReference type="SMART" id="SM00838">
    <property type="entry name" value="EFG_C"/>
    <property type="match status" value="1"/>
</dbReference>
<dbReference type="SUPFAM" id="SSF54980">
    <property type="entry name" value="EF-G C-terminal domain-like"/>
    <property type="match status" value="2"/>
</dbReference>
<dbReference type="SUPFAM" id="SSF52540">
    <property type="entry name" value="P-loop containing nucleoside triphosphate hydrolases"/>
    <property type="match status" value="1"/>
</dbReference>
<dbReference type="SUPFAM" id="SSF50447">
    <property type="entry name" value="Translation proteins"/>
    <property type="match status" value="1"/>
</dbReference>
<dbReference type="PROSITE" id="PS00301">
    <property type="entry name" value="G_TR_1"/>
    <property type="match status" value="1"/>
</dbReference>
<dbReference type="PROSITE" id="PS51722">
    <property type="entry name" value="G_TR_2"/>
    <property type="match status" value="1"/>
</dbReference>
<reference key="1">
    <citation type="submission" date="2007-07" db="EMBL/GenBank/DDBJ databases">
        <title>Complete sequence of chromosome of Shewanella baltica OS185.</title>
        <authorList>
            <consortium name="US DOE Joint Genome Institute"/>
            <person name="Copeland A."/>
            <person name="Lucas S."/>
            <person name="Lapidus A."/>
            <person name="Barry K."/>
            <person name="Glavina del Rio T."/>
            <person name="Dalin E."/>
            <person name="Tice H."/>
            <person name="Pitluck S."/>
            <person name="Sims D."/>
            <person name="Brettin T."/>
            <person name="Bruce D."/>
            <person name="Detter J.C."/>
            <person name="Han C."/>
            <person name="Schmutz J."/>
            <person name="Larimer F."/>
            <person name="Land M."/>
            <person name="Hauser L."/>
            <person name="Kyrpides N."/>
            <person name="Mikhailova N."/>
            <person name="Brettar I."/>
            <person name="Rodrigues J."/>
            <person name="Konstantinidis K."/>
            <person name="Tiedje J."/>
            <person name="Richardson P."/>
        </authorList>
    </citation>
    <scope>NUCLEOTIDE SEQUENCE [LARGE SCALE GENOMIC DNA]</scope>
    <source>
        <strain>OS185</strain>
    </source>
</reference>
<gene>
    <name evidence="1" type="primary">lepA</name>
    <name type="ordered locus">Shew185_1243</name>
</gene>
<sequence>MKQIRNFSIIAHIDHGKSTLSDRLIQVCGGLTDREMDAQVLDSMDLERERGITIKAQSVTLDYKAKDGLVYQLNFIDTPGHVDFSYEVSRSLAACEGALLVVDAGQGVEAQTLANCYTALDMNLDVVPILNKIDLPQADPERVAAEIEDIVGIDAMDAVRCSAKTGVGVDEVLEVIVAKIPPPEGDPNAPLQALIIDSWFDNYLGVVSLVRIKHGSLKKGDKFKVMSTGQNHTADRVGIFTPKQTDKTELKTGEVGFVIAGLKEIHGAPVGDTLTLAKNGAEKPLPGFKKVKPQVYAGVFPISTDEYENFRDALNKLSLNDASLFFEPESSSALGFGFRIGYLGLLHMEIVQERLEREYNLELITTAPTVVYEVVMTSGETIYVDNPSDLPAINNIEEMREPIVEANILVPKEYLGNVITLCIEKRGTQVNMVYHGNQVAVTYHLPMAEVVMDFFDRLKSTSRGYASLEYNFIRFDPADMVRLDILINGDRVDALAMVIHRSNIRHRGLALVDKMKELIPRQMFDIAIQAAVGSQIIARSTVKALRKDVTAKCYGGDVSRKKKLLNKQKEGKKRMKQVGNVEVPQEAFLAVLKLNE</sequence>
<organism>
    <name type="scientific">Shewanella baltica (strain OS185)</name>
    <dbReference type="NCBI Taxonomy" id="402882"/>
    <lineage>
        <taxon>Bacteria</taxon>
        <taxon>Pseudomonadati</taxon>
        <taxon>Pseudomonadota</taxon>
        <taxon>Gammaproteobacteria</taxon>
        <taxon>Alteromonadales</taxon>
        <taxon>Shewanellaceae</taxon>
        <taxon>Shewanella</taxon>
    </lineage>
</organism>
<name>LEPA_SHEB8</name>
<comment type="function">
    <text evidence="1">Required for accurate and efficient protein synthesis under certain stress conditions. May act as a fidelity factor of the translation reaction, by catalyzing a one-codon backward translocation of tRNAs on improperly translocated ribosomes. Back-translocation proceeds from a post-translocation (POST) complex to a pre-translocation (PRE) complex, thus giving elongation factor G a second chance to translocate the tRNAs correctly. Binds to ribosomes in a GTP-dependent manner.</text>
</comment>
<comment type="catalytic activity">
    <reaction evidence="1">
        <text>GTP + H2O = GDP + phosphate + H(+)</text>
        <dbReference type="Rhea" id="RHEA:19669"/>
        <dbReference type="ChEBI" id="CHEBI:15377"/>
        <dbReference type="ChEBI" id="CHEBI:15378"/>
        <dbReference type="ChEBI" id="CHEBI:37565"/>
        <dbReference type="ChEBI" id="CHEBI:43474"/>
        <dbReference type="ChEBI" id="CHEBI:58189"/>
        <dbReference type="EC" id="3.6.5.n1"/>
    </reaction>
</comment>
<comment type="subcellular location">
    <subcellularLocation>
        <location evidence="1">Cell inner membrane</location>
        <topology evidence="1">Peripheral membrane protein</topology>
        <orientation evidence="1">Cytoplasmic side</orientation>
    </subcellularLocation>
</comment>
<comment type="similarity">
    <text evidence="1">Belongs to the TRAFAC class translation factor GTPase superfamily. Classic translation factor GTPase family. LepA subfamily.</text>
</comment>
<feature type="chain" id="PRO_1000032051" description="Elongation factor 4">
    <location>
        <begin position="1"/>
        <end position="596"/>
    </location>
</feature>
<feature type="domain" description="tr-type G">
    <location>
        <begin position="2"/>
        <end position="184"/>
    </location>
</feature>
<feature type="binding site" evidence="1">
    <location>
        <begin position="14"/>
        <end position="19"/>
    </location>
    <ligand>
        <name>GTP</name>
        <dbReference type="ChEBI" id="CHEBI:37565"/>
    </ligand>
</feature>
<feature type="binding site" evidence="1">
    <location>
        <begin position="131"/>
        <end position="134"/>
    </location>
    <ligand>
        <name>GTP</name>
        <dbReference type="ChEBI" id="CHEBI:37565"/>
    </ligand>
</feature>